<comment type="catalytic activity">
    <reaction evidence="1">
        <text>tRNA(His) + L-histidine + ATP = L-histidyl-tRNA(His) + AMP + diphosphate + H(+)</text>
        <dbReference type="Rhea" id="RHEA:17313"/>
        <dbReference type="Rhea" id="RHEA-COMP:9665"/>
        <dbReference type="Rhea" id="RHEA-COMP:9689"/>
        <dbReference type="ChEBI" id="CHEBI:15378"/>
        <dbReference type="ChEBI" id="CHEBI:30616"/>
        <dbReference type="ChEBI" id="CHEBI:33019"/>
        <dbReference type="ChEBI" id="CHEBI:57595"/>
        <dbReference type="ChEBI" id="CHEBI:78442"/>
        <dbReference type="ChEBI" id="CHEBI:78527"/>
        <dbReference type="ChEBI" id="CHEBI:456215"/>
        <dbReference type="EC" id="6.1.1.21"/>
    </reaction>
</comment>
<comment type="subunit">
    <text evidence="1">Homodimer.</text>
</comment>
<comment type="subcellular location">
    <subcellularLocation>
        <location evidence="1">Cytoplasm</location>
    </subcellularLocation>
</comment>
<comment type="similarity">
    <text evidence="1">Belongs to the class-II aminoacyl-tRNA synthetase family.</text>
</comment>
<keyword id="KW-0030">Aminoacyl-tRNA synthetase</keyword>
<keyword id="KW-0067">ATP-binding</keyword>
<keyword id="KW-0963">Cytoplasm</keyword>
<keyword id="KW-0436">Ligase</keyword>
<keyword id="KW-0547">Nucleotide-binding</keyword>
<keyword id="KW-0648">Protein biosynthesis</keyword>
<dbReference type="EC" id="6.1.1.21" evidence="1"/>
<dbReference type="EMBL" id="CP000766">
    <property type="protein sequence ID" value="ABY72375.1"/>
    <property type="molecule type" value="Genomic_DNA"/>
</dbReference>
<dbReference type="RefSeq" id="WP_012262309.1">
    <property type="nucleotide sequence ID" value="NC_010263.3"/>
</dbReference>
<dbReference type="SMR" id="B0BWZ9"/>
<dbReference type="KEGG" id="rrj:RrIowa_0493"/>
<dbReference type="eggNOG" id="COG0124">
    <property type="taxonomic scope" value="Bacteria"/>
</dbReference>
<dbReference type="HOGENOM" id="CLU_025113_1_0_5"/>
<dbReference type="Proteomes" id="UP000000796">
    <property type="component" value="Chromosome"/>
</dbReference>
<dbReference type="GO" id="GO:0005737">
    <property type="term" value="C:cytoplasm"/>
    <property type="evidence" value="ECO:0007669"/>
    <property type="project" value="UniProtKB-SubCell"/>
</dbReference>
<dbReference type="GO" id="GO:0005524">
    <property type="term" value="F:ATP binding"/>
    <property type="evidence" value="ECO:0007669"/>
    <property type="project" value="UniProtKB-UniRule"/>
</dbReference>
<dbReference type="GO" id="GO:0004821">
    <property type="term" value="F:histidine-tRNA ligase activity"/>
    <property type="evidence" value="ECO:0007669"/>
    <property type="project" value="UniProtKB-UniRule"/>
</dbReference>
<dbReference type="GO" id="GO:0006427">
    <property type="term" value="P:histidyl-tRNA aminoacylation"/>
    <property type="evidence" value="ECO:0007669"/>
    <property type="project" value="UniProtKB-UniRule"/>
</dbReference>
<dbReference type="CDD" id="cd00773">
    <property type="entry name" value="HisRS-like_core"/>
    <property type="match status" value="1"/>
</dbReference>
<dbReference type="CDD" id="cd00859">
    <property type="entry name" value="HisRS_anticodon"/>
    <property type="match status" value="1"/>
</dbReference>
<dbReference type="Gene3D" id="3.40.50.800">
    <property type="entry name" value="Anticodon-binding domain"/>
    <property type="match status" value="1"/>
</dbReference>
<dbReference type="Gene3D" id="3.30.930.10">
    <property type="entry name" value="Bira Bifunctional Protein, Domain 2"/>
    <property type="match status" value="1"/>
</dbReference>
<dbReference type="HAMAP" id="MF_00127">
    <property type="entry name" value="His_tRNA_synth"/>
    <property type="match status" value="1"/>
</dbReference>
<dbReference type="InterPro" id="IPR006195">
    <property type="entry name" value="aa-tRNA-synth_II"/>
</dbReference>
<dbReference type="InterPro" id="IPR045864">
    <property type="entry name" value="aa-tRNA-synth_II/BPL/LPL"/>
</dbReference>
<dbReference type="InterPro" id="IPR004154">
    <property type="entry name" value="Anticodon-bd"/>
</dbReference>
<dbReference type="InterPro" id="IPR036621">
    <property type="entry name" value="Anticodon-bd_dom_sf"/>
</dbReference>
<dbReference type="InterPro" id="IPR015807">
    <property type="entry name" value="His-tRNA-ligase"/>
</dbReference>
<dbReference type="InterPro" id="IPR041715">
    <property type="entry name" value="HisRS-like_core"/>
</dbReference>
<dbReference type="InterPro" id="IPR004516">
    <property type="entry name" value="HisRS/HisZ"/>
</dbReference>
<dbReference type="InterPro" id="IPR033656">
    <property type="entry name" value="HisRS_anticodon"/>
</dbReference>
<dbReference type="NCBIfam" id="TIGR00442">
    <property type="entry name" value="hisS"/>
    <property type="match status" value="1"/>
</dbReference>
<dbReference type="PANTHER" id="PTHR43707:SF1">
    <property type="entry name" value="HISTIDINE--TRNA LIGASE, MITOCHONDRIAL-RELATED"/>
    <property type="match status" value="1"/>
</dbReference>
<dbReference type="PANTHER" id="PTHR43707">
    <property type="entry name" value="HISTIDYL-TRNA SYNTHETASE"/>
    <property type="match status" value="1"/>
</dbReference>
<dbReference type="Pfam" id="PF03129">
    <property type="entry name" value="HGTP_anticodon"/>
    <property type="match status" value="1"/>
</dbReference>
<dbReference type="Pfam" id="PF13393">
    <property type="entry name" value="tRNA-synt_His"/>
    <property type="match status" value="1"/>
</dbReference>
<dbReference type="PIRSF" id="PIRSF001549">
    <property type="entry name" value="His-tRNA_synth"/>
    <property type="match status" value="1"/>
</dbReference>
<dbReference type="SUPFAM" id="SSF52954">
    <property type="entry name" value="Class II aaRS ABD-related"/>
    <property type="match status" value="1"/>
</dbReference>
<dbReference type="SUPFAM" id="SSF55681">
    <property type="entry name" value="Class II aaRS and biotin synthetases"/>
    <property type="match status" value="1"/>
</dbReference>
<dbReference type="PROSITE" id="PS50862">
    <property type="entry name" value="AA_TRNA_LIGASE_II"/>
    <property type="match status" value="1"/>
</dbReference>
<organism>
    <name type="scientific">Rickettsia rickettsii (strain Iowa)</name>
    <dbReference type="NCBI Taxonomy" id="452659"/>
    <lineage>
        <taxon>Bacteria</taxon>
        <taxon>Pseudomonadati</taxon>
        <taxon>Pseudomonadota</taxon>
        <taxon>Alphaproteobacteria</taxon>
        <taxon>Rickettsiales</taxon>
        <taxon>Rickettsiaceae</taxon>
        <taxon>Rickettsieae</taxon>
        <taxon>Rickettsia</taxon>
        <taxon>spotted fever group</taxon>
    </lineage>
</organism>
<protein>
    <recommendedName>
        <fullName evidence="1">Histidine--tRNA ligase</fullName>
        <ecNumber evidence="1">6.1.1.21</ecNumber>
    </recommendedName>
    <alternativeName>
        <fullName evidence="1">Histidyl-tRNA synthetase</fullName>
        <shortName evidence="1">HisRS</shortName>
    </alternativeName>
</protein>
<reference key="1">
    <citation type="journal article" date="2008" name="Infect. Immun.">
        <title>Genomic comparison of virulent Rickettsia rickettsii Sheila Smith and avirulent Rickettsia rickettsii Iowa.</title>
        <authorList>
            <person name="Ellison D.W."/>
            <person name="Clark T.R."/>
            <person name="Sturdevant D.E."/>
            <person name="Virtaneva K."/>
            <person name="Porcella S.F."/>
            <person name="Hackstadt T."/>
        </authorList>
    </citation>
    <scope>NUCLEOTIDE SEQUENCE [LARGE SCALE GENOMIC DNA]</scope>
    <source>
        <strain>Iowa</strain>
    </source>
</reference>
<feature type="chain" id="PRO_1000076282" description="Histidine--tRNA ligase">
    <location>
        <begin position="1"/>
        <end position="414"/>
    </location>
</feature>
<gene>
    <name evidence="1" type="primary">hisS</name>
    <name type="ordered locus">RrIowa_0493</name>
</gene>
<name>SYH_RICRO</name>
<sequence length="414" mass="47539">MTEQLQPLRGMKDLLPDDYKVHDYIINKARDVGVLYGYKQMSTPIVEYTKVFNRSMGESSDVISKEIYSFLDKSNDCVALRPEFTACIIRSIISNRLQHKLPLKFFSTGPVFRYDRPQAGRQRQFHQLNYEYIGAKGAITDADTLKLAVDILKALEIEQDTTLELNSLGCNESRRVYQQKLVEYLNDFKEQLSEESKIRLSKNPMRILDSKSETDQKIIANAPVLSEYYTDESKEYFEELIQYLDILGVKYSINPRLVRGLDYYCHTAFEFTTKKLGSQSTILAGGRYDGLAKIMGNNDDVPAIGFAAGIERIALMREYDVSEVKPVFVLPIGKNNICYALEIVDKLRTENIAIIIESLGKIAKRMQRIFNENAQFIIFIGDEEQANNNLKIKDLKKEEEYIVDFAKALELLKK</sequence>
<accession>B0BWZ9</accession>
<evidence type="ECO:0000255" key="1">
    <source>
        <dbReference type="HAMAP-Rule" id="MF_00127"/>
    </source>
</evidence>
<proteinExistence type="inferred from homology"/>